<name>OCT1_CAEEL</name>
<keyword id="KW-0025">Alternative splicing</keyword>
<keyword id="KW-0325">Glycoprotein</keyword>
<keyword id="KW-0406">Ion transport</keyword>
<keyword id="KW-0472">Membrane</keyword>
<keyword id="KW-1185">Reference proteome</keyword>
<keyword id="KW-0812">Transmembrane</keyword>
<keyword id="KW-1133">Transmembrane helix</keyword>
<keyword id="KW-0813">Transport</keyword>
<gene>
    <name type="primary">oct-1</name>
    <name type="ORF">F52F12.1</name>
</gene>
<proteinExistence type="evidence at protein level"/>
<evidence type="ECO:0000250" key="1"/>
<evidence type="ECO:0000255" key="2"/>
<evidence type="ECO:0000256" key="3">
    <source>
        <dbReference type="SAM" id="MobiDB-lite"/>
    </source>
</evidence>
<evidence type="ECO:0000269" key="4">
    <source>
    </source>
</evidence>
<evidence type="ECO:0000269" key="5">
    <source>
    </source>
</evidence>
<evidence type="ECO:0000303" key="6">
    <source>
    </source>
</evidence>
<evidence type="ECO:0000305" key="7"/>
<reference key="1">
    <citation type="journal article" date="1999" name="Biochim. Biophys. Acta">
        <title>Identity of the F52F12.1 gene product in Caenorhabditis elegans as an organic cation transporter.</title>
        <authorList>
            <person name="Wu X."/>
            <person name="Fei Y.-J."/>
            <person name="Huang W."/>
            <person name="Chancy C."/>
            <person name="Leibach F.H."/>
            <person name="Ganapathy V."/>
        </authorList>
    </citation>
    <scope>NUCLEOTIDE SEQUENCE [MRNA] (ISOFORM B)</scope>
    <scope>FUNCTION</scope>
</reference>
<reference key="2">
    <citation type="journal article" date="1998" name="Science">
        <title>Genome sequence of the nematode C. elegans: a platform for investigating biology.</title>
        <authorList>
            <consortium name="The C. elegans sequencing consortium"/>
        </authorList>
    </citation>
    <scope>NUCLEOTIDE SEQUENCE [LARGE SCALE GENOMIC DNA]</scope>
    <scope>ALTERNATIVE SPLICING</scope>
    <source>
        <strain>Bristol N2</strain>
    </source>
</reference>
<reference key="3">
    <citation type="journal article" date="2007" name="Mol. Cell. Proteomics">
        <title>Proteomics reveals N-linked glycoprotein diversity in Caenorhabditis elegans and suggests an atypical translocation mechanism for integral membrane proteins.</title>
        <authorList>
            <person name="Kaji H."/>
            <person name="Kamiie J."/>
            <person name="Kawakami H."/>
            <person name="Kido K."/>
            <person name="Yamauchi Y."/>
            <person name="Shinkawa T."/>
            <person name="Taoka M."/>
            <person name="Takahashi N."/>
            <person name="Isobe T."/>
        </authorList>
    </citation>
    <scope>GLYCOSYLATION [LARGE SCALE ANALYSIS] AT ASN-87 AND ASN-98</scope>
    <scope>IDENTIFICATION BY MASS SPECTROMETRY</scope>
    <source>
        <strain>Bristol N2</strain>
    </source>
</reference>
<accession>Q9U539</accession>
<accession>O02270</accession>
<organism>
    <name type="scientific">Caenorhabditis elegans</name>
    <dbReference type="NCBI Taxonomy" id="6239"/>
    <lineage>
        <taxon>Eukaryota</taxon>
        <taxon>Metazoa</taxon>
        <taxon>Ecdysozoa</taxon>
        <taxon>Nematoda</taxon>
        <taxon>Chromadorea</taxon>
        <taxon>Rhabditida</taxon>
        <taxon>Rhabditina</taxon>
        <taxon>Rhabditomorpha</taxon>
        <taxon>Rhabditoidea</taxon>
        <taxon>Rhabditidae</taxon>
        <taxon>Peloderinae</taxon>
        <taxon>Caenorhabditis</taxon>
    </lineage>
</organism>
<protein>
    <recommendedName>
        <fullName>Organic cation transporter 1</fullName>
    </recommendedName>
    <alternativeName>
        <fullName>CeOCT1</fullName>
    </alternativeName>
</protein>
<sequence length="585" mass="65462">MSFQAMETFAEISQEILMSATKPPDFDFVLEQVGNYGTYQIVFFFIICLPTSLPSAFSAFNIPFVVGNPPHTCHIPEGKEYLRPLTNDTQILSCKQYNETQINVFRAFTSAPVDTYSDRISLVPCQNGWDYDNSTYLDSLVTEFNLVCDQQAWIEISTTSFYVGSFIGNCLFGYVADKFGRRRSFFVILTVLIVCGTASSFAKDIESFIILRFFTGLAFPALFQIPFIICMEFMGNSGRIFSGLMTSLFFGAAMALLGVVAMFIRRWRQLTFFCNAPFAFYIIYYFFLPESPRWSVSVGKWADAKKQLKKIAKMNGKSNVDVDELVDSMKNHQNAAEEKETKRSHNVTDLFKTPNLRRKTLIVTYIWVMNAIIYNGLTLNVSNLPVDDYWSFIINGAVELPGYFVVWPLLQCAGRRWTLAATMIVCGIGCVSAMFMPDGYPWLVASASFIGKFGVGSGFAVIYIFAGELYPTVVRAIGMGMSSMVAGSGLLLAPHIVNLGKIVKILPLLIMGLMALSAGILTFFLPETLGAPLPMTIEDAENFGKKPEPDSGMFTQAAKKRESQPLLEPHTPMDRRRRSSRLMNI</sequence>
<dbReference type="EMBL" id="AF110415">
    <property type="protein sequence ID" value="AAF21932.1"/>
    <property type="molecule type" value="mRNA"/>
</dbReference>
<dbReference type="EMBL" id="Z83228">
    <property type="protein sequence ID" value="CAB05732.2"/>
    <property type="molecule type" value="Genomic_DNA"/>
</dbReference>
<dbReference type="EMBL" id="Z83228">
    <property type="protein sequence ID" value="CAC70093.1"/>
    <property type="molecule type" value="Genomic_DNA"/>
</dbReference>
<dbReference type="PIR" id="T22509">
    <property type="entry name" value="T22509"/>
</dbReference>
<dbReference type="RefSeq" id="NP_001021482.1">
    <molecule id="Q9U539-2"/>
    <property type="nucleotide sequence ID" value="NM_001026311.7"/>
</dbReference>
<dbReference type="RefSeq" id="NP_492617.4">
    <molecule id="Q9U539-1"/>
    <property type="nucleotide sequence ID" value="NM_060216.5"/>
</dbReference>
<dbReference type="SMR" id="Q9U539"/>
<dbReference type="BioGRID" id="38264">
    <property type="interactions" value="1"/>
</dbReference>
<dbReference type="FunCoup" id="Q9U539">
    <property type="interactions" value="145"/>
</dbReference>
<dbReference type="IntAct" id="Q9U539">
    <property type="interactions" value="1"/>
</dbReference>
<dbReference type="STRING" id="6239.F52F12.1a.1"/>
<dbReference type="TCDB" id="2.A.1.19.37">
    <property type="family name" value="the major facilitator superfamily (mfs)"/>
</dbReference>
<dbReference type="GlyCosmos" id="Q9U539">
    <property type="glycosylation" value="3 sites, No reported glycans"/>
</dbReference>
<dbReference type="iPTMnet" id="Q9U539"/>
<dbReference type="PaxDb" id="6239-F52F12.1a"/>
<dbReference type="EnsemblMetazoa" id="F52F12.1a.1">
    <molecule id="Q9U539-1"/>
    <property type="protein sequence ID" value="F52F12.1a.1"/>
    <property type="gene ID" value="WBGene00003842"/>
</dbReference>
<dbReference type="EnsemblMetazoa" id="F52F12.1b.1">
    <molecule id="Q9U539-2"/>
    <property type="protein sequence ID" value="F52F12.1b.1"/>
    <property type="gene ID" value="WBGene00003842"/>
</dbReference>
<dbReference type="GeneID" id="172841"/>
<dbReference type="KEGG" id="cel:CELE_F52F12.1"/>
<dbReference type="UCSC" id="F52F12.1a">
    <molecule id="Q9U539-1"/>
    <property type="organism name" value="c. elegans"/>
</dbReference>
<dbReference type="AGR" id="WB:WBGene00003842"/>
<dbReference type="CTD" id="172841"/>
<dbReference type="WormBase" id="F52F12.1a">
    <molecule id="Q9U539-1"/>
    <property type="protein sequence ID" value="CE41244"/>
    <property type="gene ID" value="WBGene00003842"/>
    <property type="gene designation" value="oct-1"/>
</dbReference>
<dbReference type="WormBase" id="F52F12.1b">
    <molecule id="Q9U539-2"/>
    <property type="protein sequence ID" value="CE29329"/>
    <property type="gene ID" value="WBGene00003842"/>
    <property type="gene designation" value="oct-1"/>
</dbReference>
<dbReference type="eggNOG" id="KOG0255">
    <property type="taxonomic scope" value="Eukaryota"/>
</dbReference>
<dbReference type="GeneTree" id="ENSGT00940000173250"/>
<dbReference type="InParanoid" id="Q9U539"/>
<dbReference type="OMA" id="PFIICME"/>
<dbReference type="OrthoDB" id="3936150at2759"/>
<dbReference type="PhylomeDB" id="Q9U539"/>
<dbReference type="Reactome" id="R-CEL-112311">
    <property type="pathway name" value="Neurotransmitter clearance"/>
</dbReference>
<dbReference type="Reactome" id="R-CEL-181430">
    <property type="pathway name" value="Norepinephrine Neurotransmitter Release Cycle"/>
</dbReference>
<dbReference type="Reactome" id="R-CEL-197264">
    <property type="pathway name" value="Nicotinamide salvaging"/>
</dbReference>
<dbReference type="Reactome" id="R-CEL-200425">
    <property type="pathway name" value="Carnitine shuttle"/>
</dbReference>
<dbReference type="Reactome" id="R-CEL-2161517">
    <property type="pathway name" value="Abacavir transmembrane transport"/>
</dbReference>
<dbReference type="Reactome" id="R-CEL-442660">
    <property type="pathway name" value="Na+/Cl- dependent neurotransmitter transporters"/>
</dbReference>
<dbReference type="Reactome" id="R-CEL-549127">
    <property type="pathway name" value="Organic cation transport"/>
</dbReference>
<dbReference type="Reactome" id="R-CEL-561048">
    <property type="pathway name" value="Organic anion transport"/>
</dbReference>
<dbReference type="Reactome" id="R-CEL-9749641">
    <property type="pathway name" value="Aspirin ADME"/>
</dbReference>
<dbReference type="Reactome" id="R-CEL-9793528">
    <property type="pathway name" value="Ciprofloxacin ADME"/>
</dbReference>
<dbReference type="PRO" id="PR:Q9U539"/>
<dbReference type="Proteomes" id="UP000001940">
    <property type="component" value="Chromosome I"/>
</dbReference>
<dbReference type="Bgee" id="WBGene00003842">
    <property type="expression patterns" value="Expressed in adult organism and 1 other cell type or tissue"/>
</dbReference>
<dbReference type="GO" id="GO:0016020">
    <property type="term" value="C:membrane"/>
    <property type="evidence" value="ECO:0000303"/>
    <property type="project" value="UniProtKB"/>
</dbReference>
<dbReference type="GO" id="GO:0015101">
    <property type="term" value="F:organic cation transmembrane transporter activity"/>
    <property type="evidence" value="ECO:0000315"/>
    <property type="project" value="UniProtKB"/>
</dbReference>
<dbReference type="GO" id="GO:0008340">
    <property type="term" value="P:determination of adult lifespan"/>
    <property type="evidence" value="ECO:0000315"/>
    <property type="project" value="WormBase"/>
</dbReference>
<dbReference type="GO" id="GO:0006811">
    <property type="term" value="P:monoatomic ion transport"/>
    <property type="evidence" value="ECO:0007669"/>
    <property type="project" value="UniProtKB-KW"/>
</dbReference>
<dbReference type="GO" id="GO:0015695">
    <property type="term" value="P:organic cation transport"/>
    <property type="evidence" value="ECO:0000315"/>
    <property type="project" value="UniProtKB"/>
</dbReference>
<dbReference type="CDD" id="cd17317">
    <property type="entry name" value="MFS_SLC22"/>
    <property type="match status" value="1"/>
</dbReference>
<dbReference type="FunFam" id="1.20.1250.20:FF:000705">
    <property type="entry name" value="Organic cation transporter 1"/>
    <property type="match status" value="1"/>
</dbReference>
<dbReference type="Gene3D" id="1.20.1250.20">
    <property type="entry name" value="MFS general substrate transporter like domains"/>
    <property type="match status" value="1"/>
</dbReference>
<dbReference type="InterPro" id="IPR020846">
    <property type="entry name" value="MFS_dom"/>
</dbReference>
<dbReference type="InterPro" id="IPR005828">
    <property type="entry name" value="MFS_sugar_transport-like"/>
</dbReference>
<dbReference type="InterPro" id="IPR036259">
    <property type="entry name" value="MFS_trans_sf"/>
</dbReference>
<dbReference type="PANTHER" id="PTHR24064">
    <property type="entry name" value="SOLUTE CARRIER FAMILY 22 MEMBER"/>
    <property type="match status" value="1"/>
</dbReference>
<dbReference type="Pfam" id="PF00083">
    <property type="entry name" value="Sugar_tr"/>
    <property type="match status" value="1"/>
</dbReference>
<dbReference type="SUPFAM" id="SSF103473">
    <property type="entry name" value="MFS general substrate transporter"/>
    <property type="match status" value="1"/>
</dbReference>
<dbReference type="PROSITE" id="PS50850">
    <property type="entry name" value="MFS"/>
    <property type="match status" value="1"/>
</dbReference>
<feature type="chain" id="PRO_0000220513" description="Organic cation transporter 1">
    <location>
        <begin position="1"/>
        <end position="585"/>
    </location>
</feature>
<feature type="topological domain" description="Cytoplasmic" evidence="2">
    <location>
        <begin position="1"/>
        <end position="40"/>
    </location>
</feature>
<feature type="transmembrane region" description="Helical; Name=1" evidence="2">
    <location>
        <begin position="41"/>
        <end position="61"/>
    </location>
</feature>
<feature type="topological domain" description="Extracellular" evidence="2">
    <location>
        <begin position="62"/>
        <end position="155"/>
    </location>
</feature>
<feature type="transmembrane region" description="Helical; Name=2" evidence="2">
    <location>
        <begin position="156"/>
        <end position="176"/>
    </location>
</feature>
<feature type="topological domain" description="Cytoplasmic" evidence="2">
    <location>
        <begin position="177"/>
        <end position="184"/>
    </location>
</feature>
<feature type="transmembrane region" description="Helical; Name=3" evidence="2">
    <location>
        <begin position="185"/>
        <end position="205"/>
    </location>
</feature>
<feature type="topological domain" description="Extracellular" evidence="2">
    <location>
        <begin position="206"/>
        <end position="212"/>
    </location>
</feature>
<feature type="transmembrane region" description="Helical; Name=4" evidence="2">
    <location>
        <begin position="213"/>
        <end position="233"/>
    </location>
</feature>
<feature type="topological domain" description="Cytoplasmic" evidence="2">
    <location>
        <begin position="234"/>
        <end position="243"/>
    </location>
</feature>
<feature type="transmembrane region" description="Helical; Name=5" evidence="2">
    <location>
        <begin position="244"/>
        <end position="264"/>
    </location>
</feature>
<feature type="topological domain" description="Extracellular" evidence="2">
    <location>
        <begin position="265"/>
        <end position="269"/>
    </location>
</feature>
<feature type="transmembrane region" description="Helical; Name=6" evidence="2">
    <location>
        <begin position="270"/>
        <end position="290"/>
    </location>
</feature>
<feature type="topological domain" description="Cytoplasmic" evidence="2">
    <location>
        <begin position="291"/>
        <end position="360"/>
    </location>
</feature>
<feature type="transmembrane region" description="Helical; Name=7" evidence="2">
    <location>
        <begin position="361"/>
        <end position="381"/>
    </location>
</feature>
<feature type="topological domain" description="Extracellular" evidence="2">
    <location>
        <begin position="382"/>
        <end position="389"/>
    </location>
</feature>
<feature type="transmembrane region" description="Helical; Name=8" evidence="2">
    <location>
        <begin position="390"/>
        <end position="410"/>
    </location>
</feature>
<feature type="topological domain" description="Cytoplasmic" evidence="2">
    <location>
        <begin position="411"/>
        <end position="416"/>
    </location>
</feature>
<feature type="transmembrane region" description="Helical; Name=9" evidence="2">
    <location>
        <begin position="417"/>
        <end position="437"/>
    </location>
</feature>
<feature type="topological domain" description="Extracellular" evidence="2">
    <location>
        <begin position="438"/>
        <end position="446"/>
    </location>
</feature>
<feature type="transmembrane region" description="Helical; Name=10" evidence="2">
    <location>
        <begin position="447"/>
        <end position="467"/>
    </location>
</feature>
<feature type="topological domain" description="Cytoplasmic" evidence="2">
    <location>
        <begin position="468"/>
        <end position="476"/>
    </location>
</feature>
<feature type="transmembrane region" description="Helical; Name=11" evidence="2">
    <location>
        <begin position="477"/>
        <end position="497"/>
    </location>
</feature>
<feature type="topological domain" description="Extracellular" evidence="2">
    <location>
        <begin position="498"/>
        <end position="504"/>
    </location>
</feature>
<feature type="transmembrane region" description="Helical; Name=12" evidence="2">
    <location>
        <begin position="505"/>
        <end position="525"/>
    </location>
</feature>
<feature type="topological domain" description="Cytoplasmic" evidence="2">
    <location>
        <begin position="526"/>
        <end position="585"/>
    </location>
</feature>
<feature type="region of interest" description="Disordered" evidence="3">
    <location>
        <begin position="544"/>
        <end position="585"/>
    </location>
</feature>
<feature type="compositionally biased region" description="Basic residues" evidence="3">
    <location>
        <begin position="575"/>
        <end position="585"/>
    </location>
</feature>
<feature type="glycosylation site" description="N-linked (GlcNAc...) asparagine" evidence="5">
    <location>
        <position position="87"/>
    </location>
</feature>
<feature type="glycosylation site" description="N-linked (GlcNAc...) asparagine" evidence="5">
    <location>
        <position position="98"/>
    </location>
</feature>
<feature type="glycosylation site" description="N-linked (GlcNAc...) asparagine" evidence="2">
    <location>
        <position position="133"/>
    </location>
</feature>
<feature type="splice variant" id="VSP_011122" description="In isoform b." evidence="6">
    <location>
        <begin position="1"/>
        <end position="17"/>
    </location>
</feature>
<comment type="function">
    <text evidence="4">Transports organic cations such as tetraethylammonium (TEA). Displays a broad substrate specificity.</text>
</comment>
<comment type="subcellular location">
    <subcellularLocation>
        <location evidence="1">Membrane</location>
        <topology evidence="1">Multi-pass membrane protein</topology>
    </subcellularLocation>
</comment>
<comment type="alternative products">
    <event type="alternative splicing"/>
    <isoform>
        <id>Q9U539-1</id>
        <name>a</name>
        <sequence type="displayed"/>
    </isoform>
    <isoform>
        <id>Q9U539-2</id>
        <name>b</name>
        <sequence type="described" ref="VSP_011122"/>
    </isoform>
</comment>
<comment type="similarity">
    <text evidence="7">Belongs to the major facilitator (TC 2.A.1) superfamily. Organic cation transporter (TC 2.A.1.19) family.</text>
</comment>